<comment type="function">
    <text evidence="1 5">mRNA-binding protein involved in proper cytoplasmic distribution of mitochondria. Specifically binds mRNAs of nuclear-encoded mitochondrial proteins in the cytoplasm and regulates transport or translation of these transcripts close to mitochondria, playing a role in mitochondrial biogenesis.</text>
</comment>
<comment type="interaction">
    <interactant intactId="EBI-308505">
        <id>O75153</id>
    </interactant>
    <interactant intactId="EBI-21787450">
        <id>Q96IL0</id>
        <label>COA8</label>
    </interactant>
    <organismsDiffer>false</organismsDiffer>
    <experiments>2</experiments>
</comment>
<comment type="subcellular location">
    <subcellularLocation>
        <location evidence="1">Cytoplasm</location>
    </subcellularLocation>
    <subcellularLocation>
        <location evidence="5">Cytoplasmic granule</location>
    </subcellularLocation>
    <text evidence="5">A fraction colocalizes with tyrosinated tubulin and can be detected close to mitochondria.</text>
</comment>
<comment type="similarity">
    <text evidence="1">Belongs to the CLU family.</text>
</comment>
<comment type="sequence caution" evidence="6">
    <conflict type="frameshift">
        <sequence resource="EMBL" id="AK023003"/>
    </conflict>
</comment>
<comment type="sequence caution" evidence="6">
    <conflict type="frameshift">
        <sequence resource="EMBL" id="AK125717"/>
    </conflict>
</comment>
<comment type="sequence caution" evidence="6">
    <conflict type="erroneous initiation">
        <sequence resource="EMBL-CDS" id="CAH10532"/>
    </conflict>
    <text>Truncated N-terminus.</text>
</comment>
<accession>O75153</accession>
<accession>Q6AHY2</accession>
<accession>Q6P3X7</accession>
<accession>Q6ZUG8</accession>
<accession>Q8N4U7</accession>
<accession>Q9BTA3</accession>
<accession>Q9H979</accession>
<organism>
    <name type="scientific">Homo sapiens</name>
    <name type="common">Human</name>
    <dbReference type="NCBI Taxonomy" id="9606"/>
    <lineage>
        <taxon>Eukaryota</taxon>
        <taxon>Metazoa</taxon>
        <taxon>Chordata</taxon>
        <taxon>Craniata</taxon>
        <taxon>Vertebrata</taxon>
        <taxon>Euteleostomi</taxon>
        <taxon>Mammalia</taxon>
        <taxon>Eutheria</taxon>
        <taxon>Euarchontoglires</taxon>
        <taxon>Primates</taxon>
        <taxon>Haplorrhini</taxon>
        <taxon>Catarrhini</taxon>
        <taxon>Hominidae</taxon>
        <taxon>Homo</taxon>
    </lineage>
</organism>
<proteinExistence type="evidence at protein level"/>
<protein>
    <recommendedName>
        <fullName evidence="1">Clustered mitochondria protein homolog</fullName>
    </recommendedName>
</protein>
<feature type="chain" id="PRO_0000123553" description="Clustered mitochondria protein homolog">
    <location>
        <begin position="1"/>
        <end position="1309"/>
    </location>
</feature>
<feature type="domain" description="Clu" evidence="2">
    <location>
        <begin position="335"/>
        <end position="577"/>
    </location>
</feature>
<feature type="repeat" description="TPR 1">
    <location>
        <begin position="978"/>
        <end position="1011"/>
    </location>
</feature>
<feature type="repeat" description="TPR 2">
    <location>
        <begin position="1020"/>
        <end position="1053"/>
    </location>
</feature>
<feature type="repeat" description="TPR 3">
    <location>
        <begin position="1104"/>
        <end position="1137"/>
    </location>
</feature>
<feature type="repeat" description="TPR 4">
    <location>
        <begin position="1146"/>
        <end position="1179"/>
    </location>
</feature>
<feature type="region of interest" description="Disordered" evidence="3">
    <location>
        <begin position="1"/>
        <end position="34"/>
    </location>
</feature>
<feature type="region of interest" description="Disordered" evidence="3">
    <location>
        <begin position="636"/>
        <end position="674"/>
    </location>
</feature>
<feature type="region of interest" description="Disordered" evidence="3">
    <location>
        <begin position="1264"/>
        <end position="1309"/>
    </location>
</feature>
<feature type="compositionally biased region" description="Basic and acidic residues" evidence="3">
    <location>
        <begin position="9"/>
        <end position="25"/>
    </location>
</feature>
<feature type="compositionally biased region" description="Polar residues" evidence="3">
    <location>
        <begin position="636"/>
        <end position="651"/>
    </location>
</feature>
<feature type="compositionally biased region" description="Basic and acidic residues" evidence="3">
    <location>
        <begin position="1264"/>
        <end position="1278"/>
    </location>
</feature>
<feature type="compositionally biased region" description="Low complexity" evidence="3">
    <location>
        <begin position="1279"/>
        <end position="1290"/>
    </location>
</feature>
<feature type="modified residue" description="Phosphoserine" evidence="7">
    <location>
        <position position="279"/>
    </location>
</feature>
<feature type="modified residue" description="Phosphoserine" evidence="7">
    <location>
        <position position="281"/>
    </location>
</feature>
<feature type="modified residue" description="Phosphoserine" evidence="8">
    <location>
        <position position="654"/>
    </location>
</feature>
<feature type="modified residue" description="Phosphoserine" evidence="7 8 9 10 12">
    <location>
        <position position="664"/>
    </location>
</feature>
<feature type="modified residue" description="Phosphoserine" evidence="11">
    <location>
        <position position="723"/>
    </location>
</feature>
<feature type="sequence variant" id="VAR_034008" description="In dbSNP:rs11078312." evidence="4">
    <original>A</original>
    <variation>V</variation>
    <location>
        <position position="633"/>
    </location>
</feature>
<feature type="sequence conflict" description="In Ref. 1; AK125717." evidence="6" ref="1">
    <original>M</original>
    <variation>T</variation>
    <location>
        <position position="220"/>
    </location>
</feature>
<feature type="sequence conflict" description="In Ref. 4; AAH63786." evidence="6" ref="4">
    <original>V</original>
    <variation>A</variation>
    <location>
        <position position="432"/>
    </location>
</feature>
<feature type="sequence conflict" description="In Ref. 1; AK125717." evidence="6" ref="1">
    <original>D</original>
    <variation>G</variation>
    <location>
        <position position="610"/>
    </location>
</feature>
<feature type="sequence conflict" description="In Ref. 1; AK023003, 2; CAH10532 and 4; AAH63786." evidence="6" ref="1 2 4">
    <original>T</original>
    <variation>TA</variation>
    <location>
        <position position="690"/>
    </location>
</feature>
<feature type="sequence conflict" description="In Ref. 1; AK125717." evidence="6" ref="1">
    <original>K</original>
    <variation>E</variation>
    <location>
        <position position="868"/>
    </location>
</feature>
<feature type="sequence conflict" description="In Ref. 1; AK023003." evidence="6" ref="1">
    <original>A</original>
    <variation>G</variation>
    <location>
        <position position="1104"/>
    </location>
</feature>
<feature type="sequence conflict" description="In Ref. 2; CAH10532." evidence="6" ref="2">
    <original>S</original>
    <variation>N</variation>
    <location>
        <position position="1134"/>
    </location>
</feature>
<feature type="sequence conflict" description="In Ref. 1; AK125717." evidence="6" ref="1">
    <original>N</original>
    <variation>S</variation>
    <location>
        <position position="1209"/>
    </location>
</feature>
<gene>
    <name type="primary">CLUH</name>
    <name type="synonym">KIAA0664</name>
</gene>
<dbReference type="EMBL" id="AK125717">
    <property type="status" value="NOT_ANNOTATED_CDS"/>
    <property type="molecule type" value="mRNA"/>
</dbReference>
<dbReference type="EMBL" id="AK023003">
    <property type="status" value="NOT_ANNOTATED_CDS"/>
    <property type="molecule type" value="mRNA"/>
</dbReference>
<dbReference type="EMBL" id="CR627449">
    <property type="protein sequence ID" value="CAH10532.1"/>
    <property type="status" value="ALT_INIT"/>
    <property type="molecule type" value="mRNA"/>
</dbReference>
<dbReference type="EMBL" id="AB014564">
    <property type="protein sequence ID" value="BAA31639.1"/>
    <property type="molecule type" value="mRNA"/>
</dbReference>
<dbReference type="EMBL" id="BC004266">
    <property type="protein sequence ID" value="AAH04266.1"/>
    <property type="molecule type" value="mRNA"/>
</dbReference>
<dbReference type="EMBL" id="BC033614">
    <property type="protein sequence ID" value="AAH33614.1"/>
    <property type="molecule type" value="mRNA"/>
</dbReference>
<dbReference type="EMBL" id="BC063786">
    <property type="protein sequence ID" value="AAH63786.1"/>
    <property type="molecule type" value="mRNA"/>
</dbReference>
<dbReference type="CCDS" id="CCDS92220.1"/>
<dbReference type="RefSeq" id="NP_001353591.1">
    <property type="nucleotide sequence ID" value="NM_001366662.1"/>
</dbReference>
<dbReference type="RefSeq" id="NP_056044.3">
    <property type="nucleotide sequence ID" value="NM_015229.3"/>
</dbReference>
<dbReference type="RefSeq" id="XP_047291650.1">
    <property type="nucleotide sequence ID" value="XM_047435694.1"/>
</dbReference>
<dbReference type="RefSeq" id="XP_047291651.1">
    <property type="nucleotide sequence ID" value="XM_047435695.1"/>
</dbReference>
<dbReference type="RefSeq" id="XP_054171580.1">
    <property type="nucleotide sequence ID" value="XM_054315605.1"/>
</dbReference>
<dbReference type="RefSeq" id="XP_054171581.1">
    <property type="nucleotide sequence ID" value="XM_054315606.1"/>
</dbReference>
<dbReference type="SMR" id="O75153"/>
<dbReference type="BioGRID" id="116878">
    <property type="interactions" value="161"/>
</dbReference>
<dbReference type="FunCoup" id="O75153">
    <property type="interactions" value="1669"/>
</dbReference>
<dbReference type="IntAct" id="O75153">
    <property type="interactions" value="60"/>
</dbReference>
<dbReference type="MINT" id="O75153"/>
<dbReference type="STRING" id="9606.ENSP00000458986"/>
<dbReference type="ChEMBL" id="CHEMBL4295673"/>
<dbReference type="GlyGen" id="O75153">
    <property type="glycosylation" value="1 site, 1 O-linked glycan (1 site)"/>
</dbReference>
<dbReference type="iPTMnet" id="O75153"/>
<dbReference type="MetOSite" id="O75153"/>
<dbReference type="PhosphoSitePlus" id="O75153"/>
<dbReference type="SwissPalm" id="O75153"/>
<dbReference type="BioMuta" id="CLUH"/>
<dbReference type="jPOST" id="O75153"/>
<dbReference type="MassIVE" id="O75153"/>
<dbReference type="PaxDb" id="9606-ENSP00000458986"/>
<dbReference type="PeptideAtlas" id="O75153"/>
<dbReference type="ProteomicsDB" id="49819"/>
<dbReference type="Pumba" id="O75153"/>
<dbReference type="Antibodypedia" id="22958">
    <property type="antibodies" value="69 antibodies from 15 providers"/>
</dbReference>
<dbReference type="DNASU" id="23277"/>
<dbReference type="Ensembl" id="ENST00000435359.5">
    <property type="protein sequence ID" value="ENSP00000388872.1"/>
    <property type="gene ID" value="ENSG00000132361.18"/>
</dbReference>
<dbReference type="Ensembl" id="ENST00000570628.6">
    <property type="protein sequence ID" value="ENSP00000458986.1"/>
    <property type="gene ID" value="ENSG00000132361.18"/>
</dbReference>
<dbReference type="GeneID" id="23277"/>
<dbReference type="KEGG" id="hsa:23277"/>
<dbReference type="UCSC" id="uc002fuy.1">
    <property type="organism name" value="human"/>
</dbReference>
<dbReference type="AGR" id="HGNC:29094"/>
<dbReference type="CTD" id="23277"/>
<dbReference type="DisGeNET" id="23277"/>
<dbReference type="GeneCards" id="CLUH"/>
<dbReference type="HGNC" id="HGNC:29094">
    <property type="gene designation" value="CLUH"/>
</dbReference>
<dbReference type="HPA" id="ENSG00000132361">
    <property type="expression patterns" value="Low tissue specificity"/>
</dbReference>
<dbReference type="MIM" id="616184">
    <property type="type" value="gene"/>
</dbReference>
<dbReference type="neXtProt" id="NX_O75153"/>
<dbReference type="OpenTargets" id="ENSG00000132361"/>
<dbReference type="PharmGKB" id="PA142671614"/>
<dbReference type="VEuPathDB" id="HostDB:ENSG00000132361"/>
<dbReference type="eggNOG" id="KOG1839">
    <property type="taxonomic scope" value="Eukaryota"/>
</dbReference>
<dbReference type="GeneTree" id="ENSGT00390000012485"/>
<dbReference type="InParanoid" id="O75153"/>
<dbReference type="OrthoDB" id="1414216at2759"/>
<dbReference type="PAN-GO" id="O75153">
    <property type="GO annotations" value="3 GO annotations based on evolutionary models"/>
</dbReference>
<dbReference type="PhylomeDB" id="O75153"/>
<dbReference type="TreeFam" id="TF300565"/>
<dbReference type="PathwayCommons" id="O75153"/>
<dbReference type="SignaLink" id="O75153"/>
<dbReference type="BioGRID-ORCS" id="23277">
    <property type="hits" value="76 hits in 1149 CRISPR screens"/>
</dbReference>
<dbReference type="GenomeRNAi" id="23277"/>
<dbReference type="Pharos" id="O75153">
    <property type="development level" value="Tbio"/>
</dbReference>
<dbReference type="PRO" id="PR:O75153"/>
<dbReference type="Proteomes" id="UP000005640">
    <property type="component" value="Chromosome 17"/>
</dbReference>
<dbReference type="RNAct" id="O75153">
    <property type="molecule type" value="protein"/>
</dbReference>
<dbReference type="Bgee" id="ENSG00000132361">
    <property type="expression patterns" value="Expressed in gingival epithelium and 193 other cell types or tissues"/>
</dbReference>
<dbReference type="ExpressionAtlas" id="O75153">
    <property type="expression patterns" value="baseline and differential"/>
</dbReference>
<dbReference type="GO" id="GO:0005737">
    <property type="term" value="C:cytoplasm"/>
    <property type="evidence" value="ECO:0000314"/>
    <property type="project" value="UniProtKB"/>
</dbReference>
<dbReference type="GO" id="GO:0005739">
    <property type="term" value="C:mitochondrion"/>
    <property type="evidence" value="ECO:0006056"/>
    <property type="project" value="FlyBase"/>
</dbReference>
<dbReference type="GO" id="GO:0003729">
    <property type="term" value="F:mRNA binding"/>
    <property type="evidence" value="ECO:0000314"/>
    <property type="project" value="UniProtKB"/>
</dbReference>
<dbReference type="GO" id="GO:0048312">
    <property type="term" value="P:intracellular distribution of mitochondria"/>
    <property type="evidence" value="ECO:0000315"/>
    <property type="project" value="UniProtKB"/>
</dbReference>
<dbReference type="GO" id="GO:0007005">
    <property type="term" value="P:mitochondrion organization"/>
    <property type="evidence" value="ECO:0000315"/>
    <property type="project" value="UniProtKB"/>
</dbReference>
<dbReference type="CDD" id="cd15466">
    <property type="entry name" value="CLU-central"/>
    <property type="match status" value="1"/>
</dbReference>
<dbReference type="FunFam" id="1.25.40.10:FF:000088">
    <property type="entry name" value="Clustered mitochondria (CluA/CLU1) homolog"/>
    <property type="match status" value="1"/>
</dbReference>
<dbReference type="FunFam" id="3.30.2280.10:FF:000001">
    <property type="entry name" value="Clustered mitochondria (CluA/CLU1) homolog"/>
    <property type="match status" value="1"/>
</dbReference>
<dbReference type="Gene3D" id="3.30.2280.10">
    <property type="entry name" value="Hypothetical protein (hspc210)"/>
    <property type="match status" value="1"/>
</dbReference>
<dbReference type="Gene3D" id="1.25.40.10">
    <property type="entry name" value="Tetratricopeptide repeat domain"/>
    <property type="match status" value="1"/>
</dbReference>
<dbReference type="HAMAP" id="MF_03013">
    <property type="entry name" value="CLU"/>
    <property type="match status" value="1"/>
</dbReference>
<dbReference type="InterPro" id="IPR033646">
    <property type="entry name" value="CLU-central"/>
</dbReference>
<dbReference type="InterPro" id="IPR025697">
    <property type="entry name" value="CLU_dom"/>
</dbReference>
<dbReference type="InterPro" id="IPR028275">
    <property type="entry name" value="CLU_N"/>
</dbReference>
<dbReference type="InterPro" id="IPR027523">
    <property type="entry name" value="CLU_prot"/>
</dbReference>
<dbReference type="InterPro" id="IPR023231">
    <property type="entry name" value="GSKIP_dom_sf"/>
</dbReference>
<dbReference type="InterPro" id="IPR011990">
    <property type="entry name" value="TPR-like_helical_dom_sf"/>
</dbReference>
<dbReference type="PANTHER" id="PTHR12601:SF6">
    <property type="entry name" value="CLUSTERED MITOCHONDRIA PROTEIN HOMOLOG"/>
    <property type="match status" value="1"/>
</dbReference>
<dbReference type="PANTHER" id="PTHR12601">
    <property type="entry name" value="EUKARYOTIC TRANSLATION INITIATION FACTOR 3 SUBUNIT EIF-3"/>
    <property type="match status" value="1"/>
</dbReference>
<dbReference type="Pfam" id="PF13236">
    <property type="entry name" value="CLU"/>
    <property type="match status" value="1"/>
</dbReference>
<dbReference type="Pfam" id="PF15044">
    <property type="entry name" value="CLU_N"/>
    <property type="match status" value="1"/>
</dbReference>
<dbReference type="Pfam" id="PF12807">
    <property type="entry name" value="eIF3_p135"/>
    <property type="match status" value="1"/>
</dbReference>
<dbReference type="Pfam" id="PF13424">
    <property type="entry name" value="TPR_12"/>
    <property type="match status" value="2"/>
</dbReference>
<dbReference type="SUPFAM" id="SSF103107">
    <property type="entry name" value="Hypothetical protein c14orf129, hspc210"/>
    <property type="match status" value="1"/>
</dbReference>
<dbReference type="SUPFAM" id="SSF48452">
    <property type="entry name" value="TPR-like"/>
    <property type="match status" value="2"/>
</dbReference>
<dbReference type="PROSITE" id="PS51823">
    <property type="entry name" value="CLU"/>
    <property type="match status" value="1"/>
</dbReference>
<name>CLU_HUMAN</name>
<keyword id="KW-0963">Cytoplasm</keyword>
<keyword id="KW-0597">Phosphoprotein</keyword>
<keyword id="KW-1267">Proteomics identification</keyword>
<keyword id="KW-1185">Reference proteome</keyword>
<keyword id="KW-0677">Repeat</keyword>
<keyword id="KW-0694">RNA-binding</keyword>
<keyword id="KW-0802">TPR repeat</keyword>
<reference key="1">
    <citation type="journal article" date="2004" name="Nat. Genet.">
        <title>Complete sequencing and characterization of 21,243 full-length human cDNAs.</title>
        <authorList>
            <person name="Ota T."/>
            <person name="Suzuki Y."/>
            <person name="Nishikawa T."/>
            <person name="Otsuki T."/>
            <person name="Sugiyama T."/>
            <person name="Irie R."/>
            <person name="Wakamatsu A."/>
            <person name="Hayashi K."/>
            <person name="Sato H."/>
            <person name="Nagai K."/>
            <person name="Kimura K."/>
            <person name="Makita H."/>
            <person name="Sekine M."/>
            <person name="Obayashi M."/>
            <person name="Nishi T."/>
            <person name="Shibahara T."/>
            <person name="Tanaka T."/>
            <person name="Ishii S."/>
            <person name="Yamamoto J."/>
            <person name="Saito K."/>
            <person name="Kawai Y."/>
            <person name="Isono Y."/>
            <person name="Nakamura Y."/>
            <person name="Nagahari K."/>
            <person name="Murakami K."/>
            <person name="Yasuda T."/>
            <person name="Iwayanagi T."/>
            <person name="Wagatsuma M."/>
            <person name="Shiratori A."/>
            <person name="Sudo H."/>
            <person name="Hosoiri T."/>
            <person name="Kaku Y."/>
            <person name="Kodaira H."/>
            <person name="Kondo H."/>
            <person name="Sugawara M."/>
            <person name="Takahashi M."/>
            <person name="Kanda K."/>
            <person name="Yokoi T."/>
            <person name="Furuya T."/>
            <person name="Kikkawa E."/>
            <person name="Omura Y."/>
            <person name="Abe K."/>
            <person name="Kamihara K."/>
            <person name="Katsuta N."/>
            <person name="Sato K."/>
            <person name="Tanikawa M."/>
            <person name="Yamazaki M."/>
            <person name="Ninomiya K."/>
            <person name="Ishibashi T."/>
            <person name="Yamashita H."/>
            <person name="Murakawa K."/>
            <person name="Fujimori K."/>
            <person name="Tanai H."/>
            <person name="Kimata M."/>
            <person name="Watanabe M."/>
            <person name="Hiraoka S."/>
            <person name="Chiba Y."/>
            <person name="Ishida S."/>
            <person name="Ono Y."/>
            <person name="Takiguchi S."/>
            <person name="Watanabe S."/>
            <person name="Yosida M."/>
            <person name="Hotuta T."/>
            <person name="Kusano J."/>
            <person name="Kanehori K."/>
            <person name="Takahashi-Fujii A."/>
            <person name="Hara H."/>
            <person name="Tanase T.-O."/>
            <person name="Nomura Y."/>
            <person name="Togiya S."/>
            <person name="Komai F."/>
            <person name="Hara R."/>
            <person name="Takeuchi K."/>
            <person name="Arita M."/>
            <person name="Imose N."/>
            <person name="Musashino K."/>
            <person name="Yuuki H."/>
            <person name="Oshima A."/>
            <person name="Sasaki N."/>
            <person name="Aotsuka S."/>
            <person name="Yoshikawa Y."/>
            <person name="Matsunawa H."/>
            <person name="Ichihara T."/>
            <person name="Shiohata N."/>
            <person name="Sano S."/>
            <person name="Moriya S."/>
            <person name="Momiyama H."/>
            <person name="Satoh N."/>
            <person name="Takami S."/>
            <person name="Terashima Y."/>
            <person name="Suzuki O."/>
            <person name="Nakagawa S."/>
            <person name="Senoh A."/>
            <person name="Mizoguchi H."/>
            <person name="Goto Y."/>
            <person name="Shimizu F."/>
            <person name="Wakebe H."/>
            <person name="Hishigaki H."/>
            <person name="Watanabe T."/>
            <person name="Sugiyama A."/>
            <person name="Takemoto M."/>
            <person name="Kawakami B."/>
            <person name="Yamazaki M."/>
            <person name="Watanabe K."/>
            <person name="Kumagai A."/>
            <person name="Itakura S."/>
            <person name="Fukuzumi Y."/>
            <person name="Fujimori Y."/>
            <person name="Komiyama M."/>
            <person name="Tashiro H."/>
            <person name="Tanigami A."/>
            <person name="Fujiwara T."/>
            <person name="Ono T."/>
            <person name="Yamada K."/>
            <person name="Fujii Y."/>
            <person name="Ozaki K."/>
            <person name="Hirao M."/>
            <person name="Ohmori Y."/>
            <person name="Kawabata A."/>
            <person name="Hikiji T."/>
            <person name="Kobatake N."/>
            <person name="Inagaki H."/>
            <person name="Ikema Y."/>
            <person name="Okamoto S."/>
            <person name="Okitani R."/>
            <person name="Kawakami T."/>
            <person name="Noguchi S."/>
            <person name="Itoh T."/>
            <person name="Shigeta K."/>
            <person name="Senba T."/>
            <person name="Matsumura K."/>
            <person name="Nakajima Y."/>
            <person name="Mizuno T."/>
            <person name="Morinaga M."/>
            <person name="Sasaki M."/>
            <person name="Togashi T."/>
            <person name="Oyama M."/>
            <person name="Hata H."/>
            <person name="Watanabe M."/>
            <person name="Komatsu T."/>
            <person name="Mizushima-Sugano J."/>
            <person name="Satoh T."/>
            <person name="Shirai Y."/>
            <person name="Takahashi Y."/>
            <person name="Nakagawa K."/>
            <person name="Okumura K."/>
            <person name="Nagase T."/>
            <person name="Nomura N."/>
            <person name="Kikuchi H."/>
            <person name="Masuho Y."/>
            <person name="Yamashita R."/>
            <person name="Nakai K."/>
            <person name="Yada T."/>
            <person name="Nakamura Y."/>
            <person name="Ohara O."/>
            <person name="Isogai T."/>
            <person name="Sugano S."/>
        </authorList>
    </citation>
    <scope>NUCLEOTIDE SEQUENCE [LARGE SCALE MRNA]</scope>
    <source>
        <tissue>Testis</tissue>
    </source>
</reference>
<reference key="2">
    <citation type="journal article" date="2007" name="BMC Genomics">
        <title>The full-ORF clone resource of the German cDNA consortium.</title>
        <authorList>
            <person name="Bechtel S."/>
            <person name="Rosenfelder H."/>
            <person name="Duda A."/>
            <person name="Schmidt C.P."/>
            <person name="Ernst U."/>
            <person name="Wellenreuther R."/>
            <person name="Mehrle A."/>
            <person name="Schuster C."/>
            <person name="Bahr A."/>
            <person name="Bloecker H."/>
            <person name="Heubner D."/>
            <person name="Hoerlein A."/>
            <person name="Michel G."/>
            <person name="Wedler H."/>
            <person name="Koehrer K."/>
            <person name="Ottenwaelder B."/>
            <person name="Poustka A."/>
            <person name="Wiemann S."/>
            <person name="Schupp I."/>
        </authorList>
    </citation>
    <scope>NUCLEOTIDE SEQUENCE [LARGE SCALE MRNA] OF 61-1309</scope>
    <source>
        <tissue>Salivary gland</tissue>
    </source>
</reference>
<reference key="3">
    <citation type="journal article" date="1998" name="DNA Res.">
        <title>Prediction of the coding sequences of unidentified human genes. X. The complete sequences of 100 new cDNA clones from brain which can code for large proteins in vitro.</title>
        <authorList>
            <person name="Ishikawa K."/>
            <person name="Nagase T."/>
            <person name="Suyama M."/>
            <person name="Miyajima N."/>
            <person name="Tanaka A."/>
            <person name="Kotani H."/>
            <person name="Nomura N."/>
            <person name="Ohara O."/>
        </authorList>
    </citation>
    <scope>NUCLEOTIDE SEQUENCE [LARGE SCALE MRNA] OF 176-1309</scope>
    <source>
        <tissue>Brain</tissue>
    </source>
</reference>
<reference key="4">
    <citation type="journal article" date="2004" name="Genome Res.">
        <title>The status, quality, and expansion of the NIH full-length cDNA project: the Mammalian Gene Collection (MGC).</title>
        <authorList>
            <consortium name="The MGC Project Team"/>
        </authorList>
    </citation>
    <scope>NUCLEOTIDE SEQUENCE [LARGE SCALE MRNA] OF 280-1309</scope>
    <scope>VARIANT VAL-633</scope>
    <source>
        <tissue>Blood</tissue>
        <tissue>PNS</tissue>
        <tissue>Uterus</tissue>
    </source>
</reference>
<reference key="5">
    <citation type="journal article" date="2008" name="Proc. Natl. Acad. Sci. U.S.A.">
        <title>A quantitative atlas of mitotic phosphorylation.</title>
        <authorList>
            <person name="Dephoure N."/>
            <person name="Zhou C."/>
            <person name="Villen J."/>
            <person name="Beausoleil S.A."/>
            <person name="Bakalarski C.E."/>
            <person name="Elledge S.J."/>
            <person name="Gygi S.P."/>
        </authorList>
    </citation>
    <scope>PHOSPHORYLATION [LARGE SCALE ANALYSIS] AT SER-279; SER-281 AND SER-664</scope>
    <scope>IDENTIFICATION BY MASS SPECTROMETRY [LARGE SCALE ANALYSIS]</scope>
    <source>
        <tissue>Cervix carcinoma</tissue>
    </source>
</reference>
<reference key="6">
    <citation type="journal article" date="2009" name="Anal. Chem.">
        <title>Lys-N and trypsin cover complementary parts of the phosphoproteome in a refined SCX-based approach.</title>
        <authorList>
            <person name="Gauci S."/>
            <person name="Helbig A.O."/>
            <person name="Slijper M."/>
            <person name="Krijgsveld J."/>
            <person name="Heck A.J."/>
            <person name="Mohammed S."/>
        </authorList>
    </citation>
    <scope>IDENTIFICATION BY MASS SPECTROMETRY [LARGE SCALE ANALYSIS]</scope>
</reference>
<reference key="7">
    <citation type="journal article" date="2009" name="Sci. Signal.">
        <title>Quantitative phosphoproteomic analysis of T cell receptor signaling reveals system-wide modulation of protein-protein interactions.</title>
        <authorList>
            <person name="Mayya V."/>
            <person name="Lundgren D.H."/>
            <person name="Hwang S.-I."/>
            <person name="Rezaul K."/>
            <person name="Wu L."/>
            <person name="Eng J.K."/>
            <person name="Rodionov V."/>
            <person name="Han D.K."/>
        </authorList>
    </citation>
    <scope>PHOSPHORYLATION [LARGE SCALE ANALYSIS] AT SER-654 AND SER-664</scope>
    <scope>IDENTIFICATION BY MASS SPECTROMETRY [LARGE SCALE ANALYSIS]</scope>
    <source>
        <tissue>Leukemic T-cell</tissue>
    </source>
</reference>
<reference key="8">
    <citation type="journal article" date="2010" name="Sci. Signal.">
        <title>Quantitative phosphoproteomics reveals widespread full phosphorylation site occupancy during mitosis.</title>
        <authorList>
            <person name="Olsen J.V."/>
            <person name="Vermeulen M."/>
            <person name="Santamaria A."/>
            <person name="Kumar C."/>
            <person name="Miller M.L."/>
            <person name="Jensen L.J."/>
            <person name="Gnad F."/>
            <person name="Cox J."/>
            <person name="Jensen T.S."/>
            <person name="Nigg E.A."/>
            <person name="Brunak S."/>
            <person name="Mann M."/>
        </authorList>
    </citation>
    <scope>PHOSPHORYLATION [LARGE SCALE ANALYSIS] AT SER-664</scope>
    <scope>IDENTIFICATION BY MASS SPECTROMETRY [LARGE SCALE ANALYSIS]</scope>
    <source>
        <tissue>Cervix carcinoma</tissue>
    </source>
</reference>
<reference key="9">
    <citation type="journal article" date="2011" name="BMC Syst. Biol.">
        <title>Initial characterization of the human central proteome.</title>
        <authorList>
            <person name="Burkard T.R."/>
            <person name="Planyavsky M."/>
            <person name="Kaupe I."/>
            <person name="Breitwieser F.P."/>
            <person name="Buerckstuemmer T."/>
            <person name="Bennett K.L."/>
            <person name="Superti-Furga G."/>
            <person name="Colinge J."/>
        </authorList>
    </citation>
    <scope>IDENTIFICATION BY MASS SPECTROMETRY [LARGE SCALE ANALYSIS]</scope>
</reference>
<reference key="10">
    <citation type="journal article" date="2011" name="Sci. Signal.">
        <title>System-wide temporal characterization of the proteome and phosphoproteome of human embryonic stem cell differentiation.</title>
        <authorList>
            <person name="Rigbolt K.T."/>
            <person name="Prokhorova T.A."/>
            <person name="Akimov V."/>
            <person name="Henningsen J."/>
            <person name="Johansen P.T."/>
            <person name="Kratchmarova I."/>
            <person name="Kassem M."/>
            <person name="Mann M."/>
            <person name="Olsen J.V."/>
            <person name="Blagoev B."/>
        </authorList>
    </citation>
    <scope>PHOSPHORYLATION [LARGE SCALE ANALYSIS] AT SER-664</scope>
    <scope>IDENTIFICATION BY MASS SPECTROMETRY [LARGE SCALE ANALYSIS]</scope>
</reference>
<reference key="11">
    <citation type="journal article" date="2013" name="J. Proteome Res.">
        <title>Toward a comprehensive characterization of a human cancer cell phosphoproteome.</title>
        <authorList>
            <person name="Zhou H."/>
            <person name="Di Palma S."/>
            <person name="Preisinger C."/>
            <person name="Peng M."/>
            <person name="Polat A.N."/>
            <person name="Heck A.J."/>
            <person name="Mohammed S."/>
        </authorList>
    </citation>
    <scope>PHOSPHORYLATION [LARGE SCALE ANALYSIS] AT SER-723</scope>
    <scope>IDENTIFICATION BY MASS SPECTROMETRY [LARGE SCALE ANALYSIS]</scope>
    <source>
        <tissue>Cervix carcinoma</tissue>
        <tissue>Erythroleukemia</tissue>
    </source>
</reference>
<reference key="12">
    <citation type="journal article" date="2014" name="J. Cell Biol.">
        <title>CLUH regulates mitochondrial biogenesis by binding mRNAs of nuclear-encoded mitochondrial proteins.</title>
        <authorList>
            <person name="Gao J."/>
            <person name="Schatton D."/>
            <person name="Martinelli P."/>
            <person name="Hansen H."/>
            <person name="Pla-Martin D."/>
            <person name="Barth E."/>
            <person name="Becker C."/>
            <person name="Altmueller J."/>
            <person name="Frommolt P."/>
            <person name="Sardiello M."/>
            <person name="Rugarli E.I."/>
        </authorList>
    </citation>
    <scope>FUNCTION</scope>
    <scope>SUBCELLULAR LOCATION</scope>
    <scope>RNA-BINDING</scope>
</reference>
<reference key="13">
    <citation type="journal article" date="2014" name="J. Proteomics">
        <title>An enzyme assisted RP-RPLC approach for in-depth analysis of human liver phosphoproteome.</title>
        <authorList>
            <person name="Bian Y."/>
            <person name="Song C."/>
            <person name="Cheng K."/>
            <person name="Dong M."/>
            <person name="Wang F."/>
            <person name="Huang J."/>
            <person name="Sun D."/>
            <person name="Wang L."/>
            <person name="Ye M."/>
            <person name="Zou H."/>
        </authorList>
    </citation>
    <scope>PHOSPHORYLATION [LARGE SCALE ANALYSIS] AT SER-664</scope>
    <scope>IDENTIFICATION BY MASS SPECTROMETRY [LARGE SCALE ANALYSIS]</scope>
    <source>
        <tissue>Liver</tissue>
    </source>
</reference>
<evidence type="ECO:0000255" key="1">
    <source>
        <dbReference type="HAMAP-Rule" id="MF_03013"/>
    </source>
</evidence>
<evidence type="ECO:0000255" key="2">
    <source>
        <dbReference type="PROSITE-ProRule" id="PRU01167"/>
    </source>
</evidence>
<evidence type="ECO:0000256" key="3">
    <source>
        <dbReference type="SAM" id="MobiDB-lite"/>
    </source>
</evidence>
<evidence type="ECO:0000269" key="4">
    <source>
    </source>
</evidence>
<evidence type="ECO:0000269" key="5">
    <source>
    </source>
</evidence>
<evidence type="ECO:0000305" key="6"/>
<evidence type="ECO:0007744" key="7">
    <source>
    </source>
</evidence>
<evidence type="ECO:0007744" key="8">
    <source>
    </source>
</evidence>
<evidence type="ECO:0007744" key="9">
    <source>
    </source>
</evidence>
<evidence type="ECO:0007744" key="10">
    <source>
    </source>
</evidence>
<evidence type="ECO:0007744" key="11">
    <source>
    </source>
</evidence>
<evidence type="ECO:0007744" key="12">
    <source>
    </source>
</evidence>
<sequence length="1309" mass="146670">MLLNGDCPESLKKEAAAAEPPRENGLDEAGPGDETTGQEVIVIQDTGFSVKILAPGIEPFSLQVSPQEMVQEIHQVLMDREDTCHRTCFSLHLDGNVLDHFSELRSVEGLQEGSVLRVVEEPYTVREARIHVRHVRDLLKSLDPSDAFNGVDCNSLSFLSVFTDGDLGDSGKRKKGLEMDPIDCTPPEYILPGSRERPLCPLQPQNRDWKPLQCLKVLTMSGWNPPPGNRKMHGDLMYLFVITAEDRQVSITASTRGFYLNQSTAYHFNPKPASPRFLSHSLVELLNQISPTFKKNFAVLQKKRVQRHPFERIATPFQVYSWTAPQAEHAMDCVRAEDAYTSRLGYEEHIPGQTRDWNEELQTTRELPRKNLPERLLRERAIFKVHSDFTAAATRGAMAVIDGNVMAINPSEETKMQMFIWNNIFFSLGFDVRDHYKDFGGDVAAYVAPTNDLNGVRTYNAVDVEGLYTLGTVVVDYRGYRVTAQSIIPGILERDQEQSVIYGSIDFGKTVVSHPRYLELLERTSRPLKILRHQVLNDRDEEVELCSSVECKGIIGNDGRHYILDLLRTFPPDLNFLPVPGEELPEECARAGFPRAHRHKLCCLRQELVDAFVEHRYLLFMKLAALQLMQQNASQLETPSSLENGGPSSLESKSEDPPGQEAGSEEEGSSASGLAKVKELAETIAADDGTDPRSREVIRNACKAVGSISSTAFDIRFNPDIFSPGVRFPESCQDEVRDQKQLLKDAAAFLLSCQIPGLVKDCMEHAVLPVDGATLAEVMRQRGINMRYLGKVLELVLRSPARHQLDHVFKIGIGELITRSAKHIFKTYLQGVELSGLSAAISHFLNCFLSSYPNPVAHLPADELVSKKRNKRRKNRPPGAADNTAWAVMTPQELWKNICQEAKNYFDFDLECETVDQAVETYGLQKITLLREISLKTGIQVLLKEYSFDSRHKPAFTEEDVLNIFPVVKHVNPKASDAFHFFQSGQAKVQQGFLKEGCELINEALNLFNNVYGAMHVETCACLRLLARLHYIMGDYAEALSNQQKAVLMSERVMGTEHPNTIQEYMHLALYCFASSQLSTALSLLYRARYLMLLVFGEDHPEMALLDNNIGLVLHGVMEYDLSLRFLENALAVSTKYHGPKALKVALSHHLVARVYESKAEFRSALQHEKEGYTIYKTQLGEDHEKTKESSEYLKCLTQQAVALQRTMNEIYRNGSSANIPPLKFTAPSMASVLEQLNVINGILFIPLSQKDLENLKAEVARRHQLQEASRNRDRAEEPMATEPAPAGAPGDLGSQPPAAKDPSPSVQG</sequence>